<comment type="function">
    <text evidence="1">Catalyzes the radical-mediated insertion of two sulfur atoms into the C-6 and C-8 positions of the octanoyl moiety bound to the lipoyl domains of lipoate-dependent enzymes, thereby converting the octanoylated domains into lipoylated derivatives.</text>
</comment>
<comment type="catalytic activity">
    <reaction evidence="1">
        <text>[[Fe-S] cluster scaffold protein carrying a second [4Fe-4S](2+) cluster] + N(6)-octanoyl-L-lysyl-[protein] + 2 oxidized [2Fe-2S]-[ferredoxin] + 2 S-adenosyl-L-methionine + 4 H(+) = [[Fe-S] cluster scaffold protein] + N(6)-[(R)-dihydrolipoyl]-L-lysyl-[protein] + 4 Fe(3+) + 2 hydrogen sulfide + 2 5'-deoxyadenosine + 2 L-methionine + 2 reduced [2Fe-2S]-[ferredoxin]</text>
        <dbReference type="Rhea" id="RHEA:16585"/>
        <dbReference type="Rhea" id="RHEA-COMP:9928"/>
        <dbReference type="Rhea" id="RHEA-COMP:10000"/>
        <dbReference type="Rhea" id="RHEA-COMP:10001"/>
        <dbReference type="Rhea" id="RHEA-COMP:10475"/>
        <dbReference type="Rhea" id="RHEA-COMP:14568"/>
        <dbReference type="Rhea" id="RHEA-COMP:14569"/>
        <dbReference type="ChEBI" id="CHEBI:15378"/>
        <dbReference type="ChEBI" id="CHEBI:17319"/>
        <dbReference type="ChEBI" id="CHEBI:29034"/>
        <dbReference type="ChEBI" id="CHEBI:29919"/>
        <dbReference type="ChEBI" id="CHEBI:33722"/>
        <dbReference type="ChEBI" id="CHEBI:33737"/>
        <dbReference type="ChEBI" id="CHEBI:33738"/>
        <dbReference type="ChEBI" id="CHEBI:57844"/>
        <dbReference type="ChEBI" id="CHEBI:59789"/>
        <dbReference type="ChEBI" id="CHEBI:78809"/>
        <dbReference type="ChEBI" id="CHEBI:83100"/>
        <dbReference type="EC" id="2.8.1.8"/>
    </reaction>
</comment>
<comment type="cofactor">
    <cofactor evidence="1">
        <name>[4Fe-4S] cluster</name>
        <dbReference type="ChEBI" id="CHEBI:49883"/>
    </cofactor>
    <text evidence="1">Binds 2 [4Fe-4S] clusters per subunit. One cluster is coordinated with 3 cysteines and an exchangeable S-adenosyl-L-methionine.</text>
</comment>
<comment type="pathway">
    <text evidence="1">Protein modification; protein lipoylation via endogenous pathway; protein N(6)-(lipoyl)lysine from octanoyl-[acyl-carrier-protein]: step 2/2.</text>
</comment>
<comment type="subcellular location">
    <subcellularLocation>
        <location evidence="1">Cytoplasm</location>
    </subcellularLocation>
</comment>
<comment type="similarity">
    <text evidence="1">Belongs to the radical SAM superfamily. Lipoyl synthase family.</text>
</comment>
<gene>
    <name evidence="1" type="primary">lipA</name>
    <name type="ordered locus">SCO2194</name>
    <name type="ORF">SC3H12.02</name>
    <name type="ORF">SC5F7.07</name>
</gene>
<protein>
    <recommendedName>
        <fullName evidence="1">Lipoyl synthase</fullName>
        <ecNumber evidence="1">2.8.1.8</ecNumber>
    </recommendedName>
    <alternativeName>
        <fullName evidence="1">Lip-syn</fullName>
        <shortName evidence="1">LS</shortName>
    </alternativeName>
    <alternativeName>
        <fullName evidence="1">Lipoate synthase</fullName>
    </alternativeName>
    <alternativeName>
        <fullName evidence="1">Lipoic acid synthase</fullName>
    </alternativeName>
    <alternativeName>
        <fullName evidence="1">Sulfur insertion protein LipA</fullName>
    </alternativeName>
</protein>
<name>LIPA_STRCO</name>
<keyword id="KW-0004">4Fe-4S</keyword>
<keyword id="KW-0963">Cytoplasm</keyword>
<keyword id="KW-0408">Iron</keyword>
<keyword id="KW-0411">Iron-sulfur</keyword>
<keyword id="KW-0479">Metal-binding</keyword>
<keyword id="KW-1185">Reference proteome</keyword>
<keyword id="KW-0949">S-adenosyl-L-methionine</keyword>
<keyword id="KW-0808">Transferase</keyword>
<sequence length="317" mass="36085">MSAVAPDGRKMLRLEVRNSQTPIERKPEWIKTRAKMGPEYTKMQNLVKSEGLHTVCQEAGCPNIYECWEDREATFLIGGDQCTRRCDFCQIDTGKPEALDRDEPRRVGESVVTMDLNYATITGVARDDLPDGGAWLYAETVRQIHEQTAGREAGRTKVELLAPDFNAVPELLREVFESRPEVFAHNVETVPRIFKRIRPGFRYERSLKVITDARDFGLVTKSNLILGMGETREEISEALKQLHEAGCELITITQYLRPSVRHHPVERWVKPQEFVELKEEAEQIGFSGVMSGPLVRSSYRAGRLYGMAMEQRRSATV</sequence>
<dbReference type="EC" id="2.8.1.8" evidence="1"/>
<dbReference type="EMBL" id="AL939111">
    <property type="protein sequence ID" value="CAB90841.1"/>
    <property type="molecule type" value="Genomic_DNA"/>
</dbReference>
<dbReference type="PIR" id="T35310">
    <property type="entry name" value="T35310"/>
</dbReference>
<dbReference type="RefSeq" id="NP_626446.1">
    <property type="nucleotide sequence ID" value="NC_003888.3"/>
</dbReference>
<dbReference type="RefSeq" id="WP_003976621.1">
    <property type="nucleotide sequence ID" value="NZ_VNID01000001.1"/>
</dbReference>
<dbReference type="SMR" id="Q9S2P2"/>
<dbReference type="FunCoup" id="Q9S2P2">
    <property type="interactions" value="499"/>
</dbReference>
<dbReference type="STRING" id="100226.gene:17759791"/>
<dbReference type="PaxDb" id="100226-SCO2194"/>
<dbReference type="GeneID" id="91386814"/>
<dbReference type="KEGG" id="sco:SCO2194"/>
<dbReference type="PATRIC" id="fig|100226.15.peg.2231"/>
<dbReference type="eggNOG" id="COG0320">
    <property type="taxonomic scope" value="Bacteria"/>
</dbReference>
<dbReference type="HOGENOM" id="CLU_033144_2_1_11"/>
<dbReference type="InParanoid" id="Q9S2P2"/>
<dbReference type="OrthoDB" id="9787898at2"/>
<dbReference type="PhylomeDB" id="Q9S2P2"/>
<dbReference type="UniPathway" id="UPA00538">
    <property type="reaction ID" value="UER00593"/>
</dbReference>
<dbReference type="Proteomes" id="UP000001973">
    <property type="component" value="Chromosome"/>
</dbReference>
<dbReference type="GO" id="GO:0005737">
    <property type="term" value="C:cytoplasm"/>
    <property type="evidence" value="ECO:0007669"/>
    <property type="project" value="UniProtKB-SubCell"/>
</dbReference>
<dbReference type="GO" id="GO:0051539">
    <property type="term" value="F:4 iron, 4 sulfur cluster binding"/>
    <property type="evidence" value="ECO:0007669"/>
    <property type="project" value="UniProtKB-UniRule"/>
</dbReference>
<dbReference type="GO" id="GO:0016992">
    <property type="term" value="F:lipoate synthase activity"/>
    <property type="evidence" value="ECO:0007669"/>
    <property type="project" value="UniProtKB-UniRule"/>
</dbReference>
<dbReference type="GO" id="GO:0046872">
    <property type="term" value="F:metal ion binding"/>
    <property type="evidence" value="ECO:0007669"/>
    <property type="project" value="UniProtKB-KW"/>
</dbReference>
<dbReference type="CDD" id="cd01335">
    <property type="entry name" value="Radical_SAM"/>
    <property type="match status" value="1"/>
</dbReference>
<dbReference type="FunFam" id="3.20.20.70:FF:000116">
    <property type="entry name" value="Lipoyl synthase"/>
    <property type="match status" value="1"/>
</dbReference>
<dbReference type="Gene3D" id="3.20.20.70">
    <property type="entry name" value="Aldolase class I"/>
    <property type="match status" value="1"/>
</dbReference>
<dbReference type="HAMAP" id="MF_00206">
    <property type="entry name" value="Lipoyl_synth"/>
    <property type="match status" value="1"/>
</dbReference>
<dbReference type="InterPro" id="IPR013785">
    <property type="entry name" value="Aldolase_TIM"/>
</dbReference>
<dbReference type="InterPro" id="IPR006638">
    <property type="entry name" value="Elp3/MiaA/NifB-like_rSAM"/>
</dbReference>
<dbReference type="InterPro" id="IPR031691">
    <property type="entry name" value="LIAS_N"/>
</dbReference>
<dbReference type="InterPro" id="IPR003698">
    <property type="entry name" value="Lipoyl_synth"/>
</dbReference>
<dbReference type="InterPro" id="IPR007197">
    <property type="entry name" value="rSAM"/>
</dbReference>
<dbReference type="NCBIfam" id="TIGR00510">
    <property type="entry name" value="lipA"/>
    <property type="match status" value="1"/>
</dbReference>
<dbReference type="NCBIfam" id="NF004019">
    <property type="entry name" value="PRK05481.1"/>
    <property type="match status" value="1"/>
</dbReference>
<dbReference type="NCBIfam" id="NF009544">
    <property type="entry name" value="PRK12928.1"/>
    <property type="match status" value="1"/>
</dbReference>
<dbReference type="PANTHER" id="PTHR10949">
    <property type="entry name" value="LIPOYL SYNTHASE"/>
    <property type="match status" value="1"/>
</dbReference>
<dbReference type="PANTHER" id="PTHR10949:SF0">
    <property type="entry name" value="LIPOYL SYNTHASE, MITOCHONDRIAL"/>
    <property type="match status" value="1"/>
</dbReference>
<dbReference type="Pfam" id="PF16881">
    <property type="entry name" value="LIAS_N"/>
    <property type="match status" value="1"/>
</dbReference>
<dbReference type="Pfam" id="PF04055">
    <property type="entry name" value="Radical_SAM"/>
    <property type="match status" value="1"/>
</dbReference>
<dbReference type="PIRSF" id="PIRSF005963">
    <property type="entry name" value="Lipoyl_synth"/>
    <property type="match status" value="1"/>
</dbReference>
<dbReference type="SFLD" id="SFLDF00271">
    <property type="entry name" value="lipoyl_synthase"/>
    <property type="match status" value="1"/>
</dbReference>
<dbReference type="SFLD" id="SFLDS00029">
    <property type="entry name" value="Radical_SAM"/>
    <property type="match status" value="1"/>
</dbReference>
<dbReference type="SMART" id="SM00729">
    <property type="entry name" value="Elp3"/>
    <property type="match status" value="1"/>
</dbReference>
<dbReference type="SUPFAM" id="SSF102114">
    <property type="entry name" value="Radical SAM enzymes"/>
    <property type="match status" value="1"/>
</dbReference>
<dbReference type="PROSITE" id="PS51918">
    <property type="entry name" value="RADICAL_SAM"/>
    <property type="match status" value="1"/>
</dbReference>
<reference key="1">
    <citation type="submission" date="1999-07" db="EMBL/GenBank/DDBJ databases">
        <authorList>
            <person name="Seeger K."/>
            <person name="Harris D."/>
            <person name="Bentley S.D."/>
            <person name="Parkhill J."/>
            <person name="Barrell B.G."/>
            <person name="Rajandream M.A."/>
        </authorList>
    </citation>
    <scope>NUCLEOTIDE SEQUENCE [GENOMIC DNA]</scope>
    <source>
        <strain>A3(2) / NRRL B-16638</strain>
    </source>
</reference>
<reference key="2">
    <citation type="journal article" date="2002" name="Nature">
        <title>Complete genome sequence of the model actinomycete Streptomyces coelicolor A3(2).</title>
        <authorList>
            <person name="Bentley S.D."/>
            <person name="Chater K.F."/>
            <person name="Cerdeno-Tarraga A.-M."/>
            <person name="Challis G.L."/>
            <person name="Thomson N.R."/>
            <person name="James K.D."/>
            <person name="Harris D.E."/>
            <person name="Quail M.A."/>
            <person name="Kieser H."/>
            <person name="Harper D."/>
            <person name="Bateman A."/>
            <person name="Brown S."/>
            <person name="Chandra G."/>
            <person name="Chen C.W."/>
            <person name="Collins M."/>
            <person name="Cronin A."/>
            <person name="Fraser A."/>
            <person name="Goble A."/>
            <person name="Hidalgo J."/>
            <person name="Hornsby T."/>
            <person name="Howarth S."/>
            <person name="Huang C.-H."/>
            <person name="Kieser T."/>
            <person name="Larke L."/>
            <person name="Murphy L.D."/>
            <person name="Oliver K."/>
            <person name="O'Neil S."/>
            <person name="Rabbinowitsch E."/>
            <person name="Rajandream M.A."/>
            <person name="Rutherford K.M."/>
            <person name="Rutter S."/>
            <person name="Seeger K."/>
            <person name="Saunders D."/>
            <person name="Sharp S."/>
            <person name="Squares R."/>
            <person name="Squares S."/>
            <person name="Taylor K."/>
            <person name="Warren T."/>
            <person name="Wietzorrek A."/>
            <person name="Woodward J.R."/>
            <person name="Barrell B.G."/>
            <person name="Parkhill J."/>
            <person name="Hopwood D.A."/>
        </authorList>
    </citation>
    <scope>NUCLEOTIDE SEQUENCE [LARGE SCALE GENOMIC DNA]</scope>
    <source>
        <strain>ATCC BAA-471 / A3(2) / M145</strain>
    </source>
</reference>
<feature type="chain" id="PRO_0000102366" description="Lipoyl synthase">
    <location>
        <begin position="1"/>
        <end position="317"/>
    </location>
</feature>
<feature type="domain" description="Radical SAM core" evidence="2">
    <location>
        <begin position="68"/>
        <end position="287"/>
    </location>
</feature>
<feature type="binding site" evidence="1">
    <location>
        <position position="56"/>
    </location>
    <ligand>
        <name>[4Fe-4S] cluster</name>
        <dbReference type="ChEBI" id="CHEBI:49883"/>
        <label>1</label>
    </ligand>
</feature>
<feature type="binding site" evidence="1">
    <location>
        <position position="61"/>
    </location>
    <ligand>
        <name>[4Fe-4S] cluster</name>
        <dbReference type="ChEBI" id="CHEBI:49883"/>
        <label>1</label>
    </ligand>
</feature>
<feature type="binding site" evidence="1">
    <location>
        <position position="67"/>
    </location>
    <ligand>
        <name>[4Fe-4S] cluster</name>
        <dbReference type="ChEBI" id="CHEBI:49883"/>
        <label>1</label>
    </ligand>
</feature>
<feature type="binding site" evidence="1">
    <location>
        <position position="82"/>
    </location>
    <ligand>
        <name>[4Fe-4S] cluster</name>
        <dbReference type="ChEBI" id="CHEBI:49883"/>
        <label>2</label>
        <note>4Fe-4S-S-AdoMet</note>
    </ligand>
</feature>
<feature type="binding site" evidence="1">
    <location>
        <position position="86"/>
    </location>
    <ligand>
        <name>[4Fe-4S] cluster</name>
        <dbReference type="ChEBI" id="CHEBI:49883"/>
        <label>2</label>
        <note>4Fe-4S-S-AdoMet</note>
    </ligand>
</feature>
<feature type="binding site" evidence="1">
    <location>
        <position position="89"/>
    </location>
    <ligand>
        <name>[4Fe-4S] cluster</name>
        <dbReference type="ChEBI" id="CHEBI:49883"/>
        <label>2</label>
        <note>4Fe-4S-S-AdoMet</note>
    </ligand>
</feature>
<feature type="binding site" evidence="1">
    <location>
        <position position="298"/>
    </location>
    <ligand>
        <name>[4Fe-4S] cluster</name>
        <dbReference type="ChEBI" id="CHEBI:49883"/>
        <label>1</label>
    </ligand>
</feature>
<organism>
    <name type="scientific">Streptomyces coelicolor (strain ATCC BAA-471 / A3(2) / M145)</name>
    <dbReference type="NCBI Taxonomy" id="100226"/>
    <lineage>
        <taxon>Bacteria</taxon>
        <taxon>Bacillati</taxon>
        <taxon>Actinomycetota</taxon>
        <taxon>Actinomycetes</taxon>
        <taxon>Kitasatosporales</taxon>
        <taxon>Streptomycetaceae</taxon>
        <taxon>Streptomyces</taxon>
        <taxon>Streptomyces albidoflavus group</taxon>
    </lineage>
</organism>
<evidence type="ECO:0000255" key="1">
    <source>
        <dbReference type="HAMAP-Rule" id="MF_00206"/>
    </source>
</evidence>
<evidence type="ECO:0000255" key="2">
    <source>
        <dbReference type="PROSITE-ProRule" id="PRU01266"/>
    </source>
</evidence>
<accession>Q9S2P2</accession>
<proteinExistence type="inferred from homology"/>